<name>WNT3A_PITME</name>
<gene>
    <name type="primary">WNT-3A</name>
</gene>
<comment type="function">
    <text evidence="1 3">Ligand for members of the frizzled family of seven transmembrane receptors. Functions in the canonical Wnt signaling pathway that results in activation of transcription factors of the TCF/LEF family. Required for normal embryonic mesoderm development and formation of caudal somites. Required for normal morphogenesis of the developing neural tube.</text>
</comment>
<comment type="subcellular location">
    <subcellularLocation>
        <location evidence="1">Secreted</location>
        <location evidence="1">Extracellular space</location>
        <location evidence="1">Extracellular matrix</location>
    </subcellularLocation>
    <subcellularLocation>
        <location evidence="1">Secreted</location>
    </subcellularLocation>
</comment>
<comment type="PTM">
    <text evidence="1">Disulfide bonds have critical and distinct roles in secretion and activity. Loss of each conserved cysteine results in high molecular weight oxidized Wnt oligomers, which are formed through inter-Wnt disulfide bonding.</text>
</comment>
<comment type="PTM">
    <text evidence="1 3">Palmitoleoylation is required for efficient binding to frizzled receptors. Depalmitoleoylation leads to Wnt signaling pathway inhibition.</text>
</comment>
<comment type="similarity">
    <text evidence="5">Belongs to the Wnt family.</text>
</comment>
<feature type="chain" id="PRO_0000200616" description="Protein Wnt-3a">
    <location>
        <begin position="1" status="less than"/>
        <end position="123" status="greater than"/>
    </location>
</feature>
<feature type="lipid moiety-binding region" description="O-palmitoleoyl serine" evidence="3">
    <location>
        <position position="1"/>
    </location>
</feature>
<feature type="glycosylation site" description="N-linked (GlcNAc...) asparagine" evidence="4">
    <location>
        <position position="90"/>
    </location>
</feature>
<feature type="disulfide bond" evidence="2">
    <location>
        <begin position="89"/>
        <end position="104"/>
    </location>
</feature>
<feature type="non-terminal residue">
    <location>
        <position position="1"/>
    </location>
</feature>
<feature type="non-terminal residue">
    <location>
        <position position="123"/>
    </location>
</feature>
<reference key="1">
    <citation type="journal article" date="1992" name="Proc. Natl. Acad. Sci. U.S.A.">
        <title>Diversification of the Wnt gene family on the ancestral lineage of vertebrates.</title>
        <authorList>
            <person name="Sidow A."/>
        </authorList>
    </citation>
    <scope>NUCLEOTIDE SEQUENCE [GENOMIC DNA]</scope>
</reference>
<accession>P28140</accession>
<keyword id="KW-0217">Developmental protein</keyword>
<keyword id="KW-1015">Disulfide bond</keyword>
<keyword id="KW-0272">Extracellular matrix</keyword>
<keyword id="KW-0325">Glycoprotein</keyword>
<keyword id="KW-0449">Lipoprotein</keyword>
<keyword id="KW-0964">Secreted</keyword>
<keyword id="KW-0879">Wnt signaling pathway</keyword>
<organism>
    <name type="scientific">Pituophis melanoleucus</name>
    <name type="common">Pine snake</name>
    <name type="synonym">Coluber melanoleucus</name>
    <dbReference type="NCBI Taxonomy" id="8595"/>
    <lineage>
        <taxon>Eukaryota</taxon>
        <taxon>Metazoa</taxon>
        <taxon>Chordata</taxon>
        <taxon>Craniata</taxon>
        <taxon>Vertebrata</taxon>
        <taxon>Euteleostomi</taxon>
        <taxon>Lepidosauria</taxon>
        <taxon>Squamata</taxon>
        <taxon>Bifurcata</taxon>
        <taxon>Unidentata</taxon>
        <taxon>Episquamata</taxon>
        <taxon>Toxicofera</taxon>
        <taxon>Serpentes</taxon>
        <taxon>Colubroidea</taxon>
        <taxon>Colubridae</taxon>
        <taxon>Colubrinae</taxon>
        <taxon>Pituophis</taxon>
    </lineage>
</organism>
<sequence>SGSCEVKTCWWAQPDFRAIGDYLKDKYDSASEMVVEKHRESRGWVETLRAKYALFKPPTERDLVYYENSPNFCEPNPETGSFGTRDRMCNVTSHGIDGCDLLCCGRGHNTRTEKRKEKCHCIL</sequence>
<protein>
    <recommendedName>
        <fullName>Protein Wnt-3a</fullName>
    </recommendedName>
</protein>
<proteinExistence type="inferred from homology"/>
<dbReference type="EMBL" id="M91297">
    <property type="protein sequence ID" value="AAA49455.1"/>
    <property type="molecule type" value="Genomic_DNA"/>
</dbReference>
<dbReference type="SMR" id="P28140"/>
<dbReference type="GlyCosmos" id="P28140">
    <property type="glycosylation" value="1 site, No reported glycans"/>
</dbReference>
<dbReference type="GO" id="GO:0005615">
    <property type="term" value="C:extracellular space"/>
    <property type="evidence" value="ECO:0000250"/>
    <property type="project" value="UniProtKB"/>
</dbReference>
<dbReference type="GO" id="GO:0005125">
    <property type="term" value="F:cytokine activity"/>
    <property type="evidence" value="ECO:0007669"/>
    <property type="project" value="TreeGrafter"/>
</dbReference>
<dbReference type="GO" id="GO:0005109">
    <property type="term" value="F:frizzled binding"/>
    <property type="evidence" value="ECO:0007669"/>
    <property type="project" value="TreeGrafter"/>
</dbReference>
<dbReference type="GO" id="GO:0060070">
    <property type="term" value="P:canonical Wnt signaling pathway"/>
    <property type="evidence" value="ECO:0000250"/>
    <property type="project" value="UniProtKB"/>
</dbReference>
<dbReference type="GO" id="GO:0045165">
    <property type="term" value="P:cell fate commitment"/>
    <property type="evidence" value="ECO:0007669"/>
    <property type="project" value="TreeGrafter"/>
</dbReference>
<dbReference type="GO" id="GO:0030182">
    <property type="term" value="P:neuron differentiation"/>
    <property type="evidence" value="ECO:0007669"/>
    <property type="project" value="TreeGrafter"/>
</dbReference>
<dbReference type="FunFam" id="3.30.2460.20:FF:000009">
    <property type="entry name" value="Protein Wnt-3a"/>
    <property type="match status" value="1"/>
</dbReference>
<dbReference type="Gene3D" id="3.30.2460.20">
    <property type="match status" value="1"/>
</dbReference>
<dbReference type="InterPro" id="IPR005817">
    <property type="entry name" value="Wnt"/>
</dbReference>
<dbReference type="InterPro" id="IPR043158">
    <property type="entry name" value="Wnt_C"/>
</dbReference>
<dbReference type="PANTHER" id="PTHR12027:SF82">
    <property type="entry name" value="PROTO-ONCOGENE WNT-3"/>
    <property type="match status" value="1"/>
</dbReference>
<dbReference type="PANTHER" id="PTHR12027">
    <property type="entry name" value="WNT RELATED"/>
    <property type="match status" value="1"/>
</dbReference>
<dbReference type="Pfam" id="PF00110">
    <property type="entry name" value="wnt"/>
    <property type="match status" value="1"/>
</dbReference>
<dbReference type="SMART" id="SM00097">
    <property type="entry name" value="WNT1"/>
    <property type="match status" value="1"/>
</dbReference>
<evidence type="ECO:0000250" key="1">
    <source>
        <dbReference type="UniProtKB" id="P27467"/>
    </source>
</evidence>
<evidence type="ECO:0000250" key="2">
    <source>
        <dbReference type="UniProtKB" id="P28026"/>
    </source>
</evidence>
<evidence type="ECO:0000250" key="3">
    <source>
        <dbReference type="UniProtKB" id="P56704"/>
    </source>
</evidence>
<evidence type="ECO:0000255" key="4"/>
<evidence type="ECO:0000305" key="5"/>